<sequence>MANSPHGGVLKDLLARDAPRHDELAAEAETLPAIVLSERQLCDLELIMNGGFSPLEGFMTQKDFDGVCENCRLADGHLFSMPITLDASQQVISDSNLKPGSRVTLRDFRDDRNLAILTIEDIYRADKEKEAKLVFGGDPEHPAIKYLNTKVEDFYIGGKIEAVNKLNHYDYVALRYSPAELRVHFDKLGWTRVVAFQTRNPMHRAHRELTVRAARARQANVLIHPVVGLTKPGDIDHFTRVRAYQALLPRYPNGMAVLGLLPLAMRMGGPREAIWHAIIRKNHGATHFIVGRDHAGPGKNSKGEEFYGPYDAQHAVEKYREELGIEVVEFQQVTYLPDTDEYKPKDEVPAGIKTLDISGTELRNRLRTGAHIPEWFSYPEVVKILRESSPPRATQGFTIFLTGYMNSGKDAIARALQVTLNQQGGRSVTLLLGDTVRHELSSELGFSAEDRHTNVQRIAFVAGELTRAGAAVIAAPIAPYERSRKAAREAVSGLGGSFFLVHVNTPLEYCEKTDKRGIYAKARRGEIKGFTGVDDPYEAPENADLVVDVSKQSVRSIVHEIILMLESEGYFDRL</sequence>
<accession>Q0CC19</accession>
<name>MET3_ASPTN</name>
<gene>
    <name evidence="1" type="primary">met3</name>
    <name type="synonym">sCT</name>
    <name type="ORF">ATEG_08765</name>
</gene>
<comment type="function">
    <text evidence="1">Catalyzes the first intracellular reaction of sulfate assimilation, forming adenosine-5'-phosphosulfate (APS) from inorganic sulfate and ATP. Plays an important role in sulfate activation as a component of the biosynthesis pathway of sulfur-containing amino acids.</text>
</comment>
<comment type="catalytic activity">
    <reaction evidence="1">
        <text>sulfate + ATP + H(+) = adenosine 5'-phosphosulfate + diphosphate</text>
        <dbReference type="Rhea" id="RHEA:18133"/>
        <dbReference type="ChEBI" id="CHEBI:15378"/>
        <dbReference type="ChEBI" id="CHEBI:16189"/>
        <dbReference type="ChEBI" id="CHEBI:30616"/>
        <dbReference type="ChEBI" id="CHEBI:33019"/>
        <dbReference type="ChEBI" id="CHEBI:58243"/>
        <dbReference type="EC" id="2.7.7.4"/>
    </reaction>
</comment>
<comment type="activity regulation">
    <text evidence="1">Allosterically inhibited by 3'-phosphoadenosine 5'-phosphosulfate (PAPS).</text>
</comment>
<comment type="pathway">
    <text evidence="1">Sulfur metabolism; hydrogen sulfide biosynthesis; sulfite from sulfate: step 1/3.</text>
</comment>
<comment type="subunit">
    <text evidence="1">Homohexamer. Dimer of trimers.</text>
</comment>
<comment type="subcellular location">
    <subcellularLocation>
        <location evidence="1">Cytoplasm</location>
    </subcellularLocation>
</comment>
<comment type="domain">
    <text evidence="1">The adenylyl-sulfate kinase (APS kinase) is non-functional. It is involved in allosteric regulation by PAPS. PAPS binding induces a large rotational rearrangement of domains lowering the substrate affinity of the enzyme.</text>
</comment>
<comment type="similarity">
    <text evidence="1">In the N-terminal section; belongs to the sulfate adenylyltransferase family.</text>
</comment>
<comment type="similarity">
    <text evidence="1">In the C-terminal section; belongs to the APS kinase family.</text>
</comment>
<organism>
    <name type="scientific">Aspergillus terreus (strain NIH 2624 / FGSC A1156)</name>
    <dbReference type="NCBI Taxonomy" id="341663"/>
    <lineage>
        <taxon>Eukaryota</taxon>
        <taxon>Fungi</taxon>
        <taxon>Dikarya</taxon>
        <taxon>Ascomycota</taxon>
        <taxon>Pezizomycotina</taxon>
        <taxon>Eurotiomycetes</taxon>
        <taxon>Eurotiomycetidae</taxon>
        <taxon>Eurotiales</taxon>
        <taxon>Aspergillaceae</taxon>
        <taxon>Aspergillus</taxon>
        <taxon>Aspergillus subgen. Circumdati</taxon>
    </lineage>
</organism>
<feature type="chain" id="PRO_0000283710" description="Sulfate adenylyltransferase">
    <location>
        <begin position="1"/>
        <end position="574"/>
    </location>
</feature>
<feature type="region of interest" description="N-terminal" evidence="1">
    <location>
        <begin position="1"/>
        <end position="169"/>
    </location>
</feature>
<feature type="region of interest" description="Catalytic" evidence="1">
    <location>
        <begin position="170"/>
        <end position="394"/>
    </location>
</feature>
<feature type="region of interest" description="Allosteric regulation domain; adenylyl-sulfate kinase-like" evidence="1">
    <location>
        <begin position="395"/>
        <end position="574"/>
    </location>
</feature>
<feature type="active site" evidence="1">
    <location>
        <position position="198"/>
    </location>
</feature>
<feature type="active site" evidence="1">
    <location>
        <position position="199"/>
    </location>
</feature>
<feature type="active site" evidence="1">
    <location>
        <position position="200"/>
    </location>
</feature>
<feature type="binding site" evidence="1">
    <location>
        <begin position="197"/>
        <end position="200"/>
    </location>
    <ligand>
        <name>ATP</name>
        <dbReference type="ChEBI" id="CHEBI:30616"/>
    </ligand>
</feature>
<feature type="binding site" evidence="1">
    <location>
        <position position="197"/>
    </location>
    <ligand>
        <name>sulfate</name>
        <dbReference type="ChEBI" id="CHEBI:16189"/>
    </ligand>
</feature>
<feature type="binding site" evidence="1">
    <location>
        <position position="199"/>
    </location>
    <ligand>
        <name>sulfate</name>
        <dbReference type="ChEBI" id="CHEBI:16189"/>
    </ligand>
</feature>
<feature type="binding site" evidence="1">
    <location>
        <begin position="291"/>
        <end position="294"/>
    </location>
    <ligand>
        <name>ATP</name>
        <dbReference type="ChEBI" id="CHEBI:30616"/>
    </ligand>
</feature>
<feature type="binding site" evidence="1">
    <location>
        <position position="295"/>
    </location>
    <ligand>
        <name>sulfate</name>
        <dbReference type="ChEBI" id="CHEBI:16189"/>
    </ligand>
</feature>
<feature type="binding site" evidence="1">
    <location>
        <position position="333"/>
    </location>
    <ligand>
        <name>ATP</name>
        <dbReference type="ChEBI" id="CHEBI:30616"/>
    </ligand>
</feature>
<feature type="binding site" evidence="1">
    <location>
        <begin position="434"/>
        <end position="437"/>
    </location>
    <ligand>
        <name>3'-phosphoadenylyl sulfate</name>
        <dbReference type="ChEBI" id="CHEBI:58339"/>
        <note>allosteric inhibitor</note>
    </ligand>
</feature>
<feature type="binding site" evidence="1">
    <location>
        <position position="451"/>
    </location>
    <ligand>
        <name>3'-phosphoadenylyl sulfate</name>
        <dbReference type="ChEBI" id="CHEBI:58339"/>
        <note>allosteric inhibitor</note>
    </ligand>
</feature>
<feature type="binding site" evidence="1">
    <location>
        <begin position="477"/>
        <end position="478"/>
    </location>
    <ligand>
        <name>3'-phosphoadenylyl sulfate</name>
        <dbReference type="ChEBI" id="CHEBI:58339"/>
        <note>allosteric inhibitor</note>
    </ligand>
</feature>
<feature type="binding site" evidence="1">
    <location>
        <position position="516"/>
    </location>
    <ligand>
        <name>3'-phosphoadenylyl sulfate</name>
        <dbReference type="ChEBI" id="CHEBI:58339"/>
        <note>allosteric inhibitor</note>
    </ligand>
</feature>
<feature type="site" description="Transition state stabilizer" evidence="1">
    <location>
        <position position="203"/>
    </location>
</feature>
<feature type="site" description="Transition state stabilizer" evidence="1">
    <location>
        <position position="206"/>
    </location>
</feature>
<feature type="site" description="Induces change in substrate recognition on ATP binding" evidence="1">
    <location>
        <position position="330"/>
    </location>
</feature>
<keyword id="KW-0021">Allosteric enzyme</keyword>
<keyword id="KW-0028">Amino-acid biosynthesis</keyword>
<keyword id="KW-0067">ATP-binding</keyword>
<keyword id="KW-0198">Cysteine biosynthesis</keyword>
<keyword id="KW-0963">Cytoplasm</keyword>
<keyword id="KW-0486">Methionine biosynthesis</keyword>
<keyword id="KW-0547">Nucleotide-binding</keyword>
<keyword id="KW-0548">Nucleotidyltransferase</keyword>
<keyword id="KW-1185">Reference proteome</keyword>
<keyword id="KW-0808">Transferase</keyword>
<dbReference type="EC" id="2.7.7.4" evidence="1"/>
<dbReference type="EMBL" id="CH476606">
    <property type="protein sequence ID" value="EAU30897.1"/>
    <property type="molecule type" value="Genomic_DNA"/>
</dbReference>
<dbReference type="RefSeq" id="XP_001217351.1">
    <property type="nucleotide sequence ID" value="XM_001217350.1"/>
</dbReference>
<dbReference type="SMR" id="Q0CC19"/>
<dbReference type="STRING" id="341663.Q0CC19"/>
<dbReference type="EnsemblFungi" id="EAU30897">
    <property type="protein sequence ID" value="EAU30897"/>
    <property type="gene ID" value="ATEG_08765"/>
</dbReference>
<dbReference type="GeneID" id="4323551"/>
<dbReference type="VEuPathDB" id="FungiDB:ATEG_08765"/>
<dbReference type="eggNOG" id="KOG0636">
    <property type="taxonomic scope" value="Eukaryota"/>
</dbReference>
<dbReference type="HOGENOM" id="CLU_022950_0_0_1"/>
<dbReference type="OMA" id="MEMRYAG"/>
<dbReference type="OrthoDB" id="468at2759"/>
<dbReference type="UniPathway" id="UPA00140">
    <property type="reaction ID" value="UER00204"/>
</dbReference>
<dbReference type="Proteomes" id="UP000007963">
    <property type="component" value="Unassembled WGS sequence"/>
</dbReference>
<dbReference type="GO" id="GO:0005737">
    <property type="term" value="C:cytoplasm"/>
    <property type="evidence" value="ECO:0007669"/>
    <property type="project" value="UniProtKB-SubCell"/>
</dbReference>
<dbReference type="GO" id="GO:0004020">
    <property type="term" value="F:adenylylsulfate kinase activity"/>
    <property type="evidence" value="ECO:0007669"/>
    <property type="project" value="InterPro"/>
</dbReference>
<dbReference type="GO" id="GO:0005524">
    <property type="term" value="F:ATP binding"/>
    <property type="evidence" value="ECO:0007669"/>
    <property type="project" value="UniProtKB-KW"/>
</dbReference>
<dbReference type="GO" id="GO:0004781">
    <property type="term" value="F:sulfate adenylyltransferase (ATP) activity"/>
    <property type="evidence" value="ECO:0007669"/>
    <property type="project" value="UniProtKB-UniRule"/>
</dbReference>
<dbReference type="GO" id="GO:0019344">
    <property type="term" value="P:cysteine biosynthetic process"/>
    <property type="evidence" value="ECO:0007669"/>
    <property type="project" value="UniProtKB-KW"/>
</dbReference>
<dbReference type="GO" id="GO:0070814">
    <property type="term" value="P:hydrogen sulfide biosynthetic process"/>
    <property type="evidence" value="ECO:0007669"/>
    <property type="project" value="UniProtKB-UniRule"/>
</dbReference>
<dbReference type="GO" id="GO:0009086">
    <property type="term" value="P:methionine biosynthetic process"/>
    <property type="evidence" value="ECO:0007669"/>
    <property type="project" value="UniProtKB-KW"/>
</dbReference>
<dbReference type="GO" id="GO:0010134">
    <property type="term" value="P:sulfate assimilation via adenylyl sulfate reduction"/>
    <property type="evidence" value="ECO:0007669"/>
    <property type="project" value="TreeGrafter"/>
</dbReference>
<dbReference type="GO" id="GO:0019379">
    <property type="term" value="P:sulfate assimilation, phosphoadenylyl sulfate reduction by phosphoadenylyl-sulfate reductase (thioredoxin)"/>
    <property type="evidence" value="ECO:0007669"/>
    <property type="project" value="TreeGrafter"/>
</dbReference>
<dbReference type="CDD" id="cd02027">
    <property type="entry name" value="APSK"/>
    <property type="match status" value="1"/>
</dbReference>
<dbReference type="CDD" id="cd00517">
    <property type="entry name" value="ATPS"/>
    <property type="match status" value="1"/>
</dbReference>
<dbReference type="FunFam" id="3.10.400.10:FF:000003">
    <property type="entry name" value="Sulfate adenylyltransferase"/>
    <property type="match status" value="1"/>
</dbReference>
<dbReference type="FunFam" id="3.40.50.300:FF:000802">
    <property type="entry name" value="Sulfate adenylyltransferase"/>
    <property type="match status" value="1"/>
</dbReference>
<dbReference type="FunFam" id="3.40.50.620:FF:000052">
    <property type="entry name" value="Sulfate adenylyltransferase"/>
    <property type="match status" value="1"/>
</dbReference>
<dbReference type="Gene3D" id="3.40.50.620">
    <property type="entry name" value="HUPs"/>
    <property type="match status" value="1"/>
</dbReference>
<dbReference type="Gene3D" id="3.40.50.300">
    <property type="entry name" value="P-loop containing nucleotide triphosphate hydrolases"/>
    <property type="match status" value="1"/>
</dbReference>
<dbReference type="Gene3D" id="3.10.400.10">
    <property type="entry name" value="Sulfate adenylyltransferase"/>
    <property type="match status" value="1"/>
</dbReference>
<dbReference type="HAMAP" id="MF_03106">
    <property type="entry name" value="Sulf_adenylyltr_euk"/>
    <property type="match status" value="1"/>
</dbReference>
<dbReference type="InterPro" id="IPR002891">
    <property type="entry name" value="APS_kinase"/>
</dbReference>
<dbReference type="InterPro" id="IPR025980">
    <property type="entry name" value="ATP-Sase_PUA-like_dom"/>
</dbReference>
<dbReference type="InterPro" id="IPR027417">
    <property type="entry name" value="P-loop_NTPase"/>
</dbReference>
<dbReference type="InterPro" id="IPR015947">
    <property type="entry name" value="PUA-like_sf"/>
</dbReference>
<dbReference type="InterPro" id="IPR014729">
    <property type="entry name" value="Rossmann-like_a/b/a_fold"/>
</dbReference>
<dbReference type="InterPro" id="IPR027535">
    <property type="entry name" value="Sulf_adenylyltr_euk"/>
</dbReference>
<dbReference type="InterPro" id="IPR050512">
    <property type="entry name" value="Sulf_AdTrans/APS_kinase"/>
</dbReference>
<dbReference type="InterPro" id="IPR024951">
    <property type="entry name" value="Sulfurylase_cat_dom"/>
</dbReference>
<dbReference type="InterPro" id="IPR002650">
    <property type="entry name" value="Sulphate_adenylyltransferase"/>
</dbReference>
<dbReference type="NCBIfam" id="TIGR00455">
    <property type="entry name" value="apsK"/>
    <property type="match status" value="1"/>
</dbReference>
<dbReference type="NCBIfam" id="NF004040">
    <property type="entry name" value="PRK05537.1"/>
    <property type="match status" value="1"/>
</dbReference>
<dbReference type="NCBIfam" id="TIGR00339">
    <property type="entry name" value="sopT"/>
    <property type="match status" value="1"/>
</dbReference>
<dbReference type="PANTHER" id="PTHR42700">
    <property type="entry name" value="SULFATE ADENYLYLTRANSFERASE"/>
    <property type="match status" value="1"/>
</dbReference>
<dbReference type="PANTHER" id="PTHR42700:SF1">
    <property type="entry name" value="SULFATE ADENYLYLTRANSFERASE"/>
    <property type="match status" value="1"/>
</dbReference>
<dbReference type="Pfam" id="PF01583">
    <property type="entry name" value="APS_kinase"/>
    <property type="match status" value="1"/>
</dbReference>
<dbReference type="Pfam" id="PF01747">
    <property type="entry name" value="ATP-sulfurylase"/>
    <property type="match status" value="1"/>
</dbReference>
<dbReference type="Pfam" id="PF14306">
    <property type="entry name" value="PUA_2"/>
    <property type="match status" value="1"/>
</dbReference>
<dbReference type="SUPFAM" id="SSF52374">
    <property type="entry name" value="Nucleotidylyl transferase"/>
    <property type="match status" value="1"/>
</dbReference>
<dbReference type="SUPFAM" id="SSF52540">
    <property type="entry name" value="P-loop containing nucleoside triphosphate hydrolases"/>
    <property type="match status" value="1"/>
</dbReference>
<dbReference type="SUPFAM" id="SSF88697">
    <property type="entry name" value="PUA domain-like"/>
    <property type="match status" value="1"/>
</dbReference>
<reference key="1">
    <citation type="submission" date="2005-09" db="EMBL/GenBank/DDBJ databases">
        <title>Annotation of the Aspergillus terreus NIH2624 genome.</title>
        <authorList>
            <person name="Birren B.W."/>
            <person name="Lander E.S."/>
            <person name="Galagan J.E."/>
            <person name="Nusbaum C."/>
            <person name="Devon K."/>
            <person name="Henn M."/>
            <person name="Ma L.-J."/>
            <person name="Jaffe D.B."/>
            <person name="Butler J."/>
            <person name="Alvarez P."/>
            <person name="Gnerre S."/>
            <person name="Grabherr M."/>
            <person name="Kleber M."/>
            <person name="Mauceli E.W."/>
            <person name="Brockman W."/>
            <person name="Rounsley S."/>
            <person name="Young S.K."/>
            <person name="LaButti K."/>
            <person name="Pushparaj V."/>
            <person name="DeCaprio D."/>
            <person name="Crawford M."/>
            <person name="Koehrsen M."/>
            <person name="Engels R."/>
            <person name="Montgomery P."/>
            <person name="Pearson M."/>
            <person name="Howarth C."/>
            <person name="Larson L."/>
            <person name="Luoma S."/>
            <person name="White J."/>
            <person name="Alvarado L."/>
            <person name="Kodira C.D."/>
            <person name="Zeng Q."/>
            <person name="Oleary S."/>
            <person name="Yandava C."/>
            <person name="Denning D.W."/>
            <person name="Nierman W.C."/>
            <person name="Milne T."/>
            <person name="Madden K."/>
        </authorList>
    </citation>
    <scope>NUCLEOTIDE SEQUENCE [LARGE SCALE GENOMIC DNA]</scope>
    <source>
        <strain>NIH 2624 / FGSC A1156</strain>
    </source>
</reference>
<proteinExistence type="inferred from homology"/>
<evidence type="ECO:0000255" key="1">
    <source>
        <dbReference type="HAMAP-Rule" id="MF_03106"/>
    </source>
</evidence>
<protein>
    <recommendedName>
        <fullName evidence="1">Sulfate adenylyltransferase</fullName>
        <ecNumber evidence="1">2.7.7.4</ecNumber>
    </recommendedName>
    <alternativeName>
        <fullName evidence="1">ATP-sulfurylase</fullName>
    </alternativeName>
    <alternativeName>
        <fullName evidence="1">Sulfate adenylate transferase</fullName>
        <shortName evidence="1">SAT</shortName>
    </alternativeName>
</protein>